<comment type="function">
    <text evidence="1">The biological conversion of cellulose to glucose generally requires three types of hydrolytic enzymes: (1) Endoglucanases which cut internal beta-1,4-glucosidic bonds; (2) Exocellobiohydrolases that cut the disaccharide cellobiose from the non-reducing end of the cellulose polymer chain; (3) Beta-1,4-glucosidases which hydrolyze the cellobiose and other short cello-oligosaccharides to glucose.</text>
</comment>
<comment type="catalytic activity">
    <reaction>
        <text>Hydrolysis of (1-&gt;4)-beta-D-glucosidic linkages in cellulose and cellotetraose, releasing cellobiose from the non-reducing ends of the chains.</text>
        <dbReference type="EC" id="3.2.1.91"/>
    </reaction>
</comment>
<comment type="subcellular location">
    <subcellularLocation>
        <location evidence="3">Secreted</location>
    </subcellularLocation>
</comment>
<comment type="similarity">
    <text evidence="3">Belongs to the glycosyl hydrolase 7 (cellulase C) family.</text>
</comment>
<keyword id="KW-0119">Carbohydrate metabolism</keyword>
<keyword id="KW-0136">Cellulose degradation</keyword>
<keyword id="KW-0325">Glycoprotein</keyword>
<keyword id="KW-0326">Glycosidase</keyword>
<keyword id="KW-0378">Hydrolase</keyword>
<keyword id="KW-0624">Polysaccharide degradation</keyword>
<keyword id="KW-1185">Reference proteome</keyword>
<keyword id="KW-0964">Secreted</keyword>
<keyword id="KW-0732">Signal</keyword>
<reference key="1">
    <citation type="journal article" date="2008" name="PLoS Genet.">
        <title>Genomic islands in the pathogenic filamentous fungus Aspergillus fumigatus.</title>
        <authorList>
            <person name="Fedorova N.D."/>
            <person name="Khaldi N."/>
            <person name="Joardar V.S."/>
            <person name="Maiti R."/>
            <person name="Amedeo P."/>
            <person name="Anderson M.J."/>
            <person name="Crabtree J."/>
            <person name="Silva J.C."/>
            <person name="Badger J.H."/>
            <person name="Albarraq A."/>
            <person name="Angiuoli S."/>
            <person name="Bussey H."/>
            <person name="Bowyer P."/>
            <person name="Cotty P.J."/>
            <person name="Dyer P.S."/>
            <person name="Egan A."/>
            <person name="Galens K."/>
            <person name="Fraser-Liggett C.M."/>
            <person name="Haas B.J."/>
            <person name="Inman J.M."/>
            <person name="Kent R."/>
            <person name="Lemieux S."/>
            <person name="Malavazi I."/>
            <person name="Orvis J."/>
            <person name="Roemer T."/>
            <person name="Ronning C.M."/>
            <person name="Sundaram J.P."/>
            <person name="Sutton G."/>
            <person name="Turner G."/>
            <person name="Venter J.C."/>
            <person name="White O.R."/>
            <person name="Whitty B.R."/>
            <person name="Youngman P."/>
            <person name="Wolfe K.H."/>
            <person name="Goldman G.H."/>
            <person name="Wortman J.R."/>
            <person name="Jiang B."/>
            <person name="Denning D.W."/>
            <person name="Nierman W.C."/>
        </authorList>
    </citation>
    <scope>NUCLEOTIDE SEQUENCE [LARGE SCALE GENOMIC DNA]</scope>
    <source>
        <strain>ATCC 1007 / CBS 513.65 / DSM 816 / NCTC 3887 / NRRL 1 / QM 1276 / 107</strain>
    </source>
</reference>
<evidence type="ECO:0000250" key="1"/>
<evidence type="ECO:0000255" key="2"/>
<evidence type="ECO:0000305" key="3"/>
<name>CBHA_ASPCL</name>
<proteinExistence type="inferred from homology"/>
<gene>
    <name type="primary">cbhA</name>
    <name type="synonym">celD</name>
    <name type="ORF">ACLA_088870</name>
</gene>
<sequence length="453" mass="48214">MYQRALLFSALATAVSAQQVGTQKAEVHPALTWQKCTAAGSCTDQKGSVVIDANWRWLHSTEDTTNCYTGNEWNAELCPDNEACAKNCALDGADYSGTYGVTADGSSLKLNFVTSANVGSRLYLMEDDETYQMFNLLNNEFTFDVDVSNLPCGLNGALYFVSMDADGGLSKYPGNKAGAKYGTGYCDSQCPRDLKFINGEANVEGWKPSDNDKNAGVGGYGSCCPEMDIWEANSISTAYTPHPCDGMEQTRCDGNDCGGTYSSTRYAGTCDPDGCDFNSFRMGNESFYGPGGLVDTKSPITVVTQFVTAGGTDSGALKEIRRVYVQGGKVIGNSASNVAGVEGDSITSDFCTAQKKAFGDEDIFSKHGGLEGMGKALNKMALIVSIWDDHASSMMWLDSTYPVDADASTPGVARGTCEHGLGDPETVESQHPDASVTFSNIKFGPIGSTYKSV</sequence>
<accession>A1CE97</accession>
<organism>
    <name type="scientific">Aspergillus clavatus (strain ATCC 1007 / CBS 513.65 / DSM 816 / NCTC 3887 / NRRL 1 / QM 1276 / 107)</name>
    <dbReference type="NCBI Taxonomy" id="344612"/>
    <lineage>
        <taxon>Eukaryota</taxon>
        <taxon>Fungi</taxon>
        <taxon>Dikarya</taxon>
        <taxon>Ascomycota</taxon>
        <taxon>Pezizomycotina</taxon>
        <taxon>Eurotiomycetes</taxon>
        <taxon>Eurotiomycetidae</taxon>
        <taxon>Eurotiales</taxon>
        <taxon>Aspergillaceae</taxon>
        <taxon>Aspergillus</taxon>
        <taxon>Aspergillus subgen. Fumigati</taxon>
    </lineage>
</organism>
<feature type="signal peptide" evidence="2">
    <location>
        <begin position="1"/>
        <end position="17"/>
    </location>
</feature>
<feature type="chain" id="PRO_0000393538" description="Probable 1,4-beta-D-glucan cellobiohydrolase A">
    <location>
        <begin position="18"/>
        <end position="453"/>
    </location>
</feature>
<feature type="active site" description="Nucleophile" evidence="1">
    <location>
        <position position="226"/>
    </location>
</feature>
<feature type="active site" description="Proton donor" evidence="1">
    <location>
        <position position="231"/>
    </location>
</feature>
<feature type="glycosylation site" description="N-linked (GlcNAc...) asparagine" evidence="2">
    <location>
        <position position="284"/>
    </location>
</feature>
<protein>
    <recommendedName>
        <fullName>Probable 1,4-beta-D-glucan cellobiohydrolase A</fullName>
        <ecNumber>3.2.1.91</ecNumber>
    </recommendedName>
    <alternativeName>
        <fullName>Beta-glucancellobiohydrolase A</fullName>
    </alternativeName>
    <alternativeName>
        <fullName>Cellobiohydrolase D</fullName>
    </alternativeName>
    <alternativeName>
        <fullName>Exocellobiohydrolase A</fullName>
    </alternativeName>
    <alternativeName>
        <fullName>Exoglucanase A</fullName>
    </alternativeName>
</protein>
<dbReference type="EC" id="3.2.1.91"/>
<dbReference type="EMBL" id="DS027052">
    <property type="protein sequence ID" value="EAW11196.1"/>
    <property type="molecule type" value="Genomic_DNA"/>
</dbReference>
<dbReference type="RefSeq" id="XP_001272622.1">
    <property type="nucleotide sequence ID" value="XM_001272621.1"/>
</dbReference>
<dbReference type="SMR" id="A1CE97"/>
<dbReference type="STRING" id="344612.A1CE97"/>
<dbReference type="GlyCosmos" id="A1CE97">
    <property type="glycosylation" value="1 site, No reported glycans"/>
</dbReference>
<dbReference type="EnsemblFungi" id="EAW11196">
    <property type="protein sequence ID" value="EAW11196"/>
    <property type="gene ID" value="ACLA_088870"/>
</dbReference>
<dbReference type="GeneID" id="4704945"/>
<dbReference type="KEGG" id="act:ACLA_088870"/>
<dbReference type="VEuPathDB" id="FungiDB:ACLA_088870"/>
<dbReference type="eggNOG" id="ENOG502QPHV">
    <property type="taxonomic scope" value="Eukaryota"/>
</dbReference>
<dbReference type="HOGENOM" id="CLU_020817_3_2_1"/>
<dbReference type="OMA" id="NTYQMFQ"/>
<dbReference type="OrthoDB" id="412382at2759"/>
<dbReference type="Proteomes" id="UP000006701">
    <property type="component" value="Unassembled WGS sequence"/>
</dbReference>
<dbReference type="GO" id="GO:0005576">
    <property type="term" value="C:extracellular region"/>
    <property type="evidence" value="ECO:0007669"/>
    <property type="project" value="UniProtKB-SubCell"/>
</dbReference>
<dbReference type="GO" id="GO:0016162">
    <property type="term" value="F:cellulose 1,4-beta-cellobiosidase activity"/>
    <property type="evidence" value="ECO:0007669"/>
    <property type="project" value="UniProtKB-EC"/>
</dbReference>
<dbReference type="GO" id="GO:0030245">
    <property type="term" value="P:cellulose catabolic process"/>
    <property type="evidence" value="ECO:0007669"/>
    <property type="project" value="UniProtKB-KW"/>
</dbReference>
<dbReference type="CDD" id="cd07999">
    <property type="entry name" value="GH7_CBH_EG"/>
    <property type="match status" value="1"/>
</dbReference>
<dbReference type="FunFam" id="2.70.100.10:FF:000001">
    <property type="entry name" value="Glucanase"/>
    <property type="match status" value="1"/>
</dbReference>
<dbReference type="Gene3D" id="2.70.100.10">
    <property type="entry name" value="Glycoside hydrolase, family 7, domain"/>
    <property type="match status" value="1"/>
</dbReference>
<dbReference type="InterPro" id="IPR013320">
    <property type="entry name" value="ConA-like_dom_sf"/>
</dbReference>
<dbReference type="InterPro" id="IPR001722">
    <property type="entry name" value="Glyco_hydro_7"/>
</dbReference>
<dbReference type="InterPro" id="IPR037019">
    <property type="entry name" value="Glyco_hydro_7_sf"/>
</dbReference>
<dbReference type="PANTHER" id="PTHR33753:SF6">
    <property type="entry name" value="1,4-BETA-D-GLUCAN CELLOBIOHYDROLASE A-RELATED"/>
    <property type="match status" value="1"/>
</dbReference>
<dbReference type="PANTHER" id="PTHR33753">
    <property type="entry name" value="1,4-BETA-D-GLUCAN CELLOBIOHYDROLASE B"/>
    <property type="match status" value="1"/>
</dbReference>
<dbReference type="Pfam" id="PF00840">
    <property type="entry name" value="Glyco_hydro_7"/>
    <property type="match status" value="1"/>
</dbReference>
<dbReference type="PRINTS" id="PR00734">
    <property type="entry name" value="GLHYDRLASE7"/>
</dbReference>
<dbReference type="SUPFAM" id="SSF49899">
    <property type="entry name" value="Concanavalin A-like lectins/glucanases"/>
    <property type="match status" value="1"/>
</dbReference>